<dbReference type="EC" id="2.1.1.35" evidence="2"/>
<dbReference type="EC" id="2.1.1.-" evidence="2"/>
<dbReference type="EMBL" id="AL929344">
    <property type="protein sequence ID" value="CAX12082.1"/>
    <property type="molecule type" value="Genomic_DNA"/>
</dbReference>
<dbReference type="EMBL" id="BC139682">
    <property type="protein sequence ID" value="AAI39683.1"/>
    <property type="status" value="ALT_INIT"/>
    <property type="molecule type" value="mRNA"/>
</dbReference>
<dbReference type="RefSeq" id="NP_001116415.2">
    <property type="nucleotide sequence ID" value="NM_001122943.2"/>
</dbReference>
<dbReference type="SMR" id="A4QP75"/>
<dbReference type="FunCoup" id="A4QP75">
    <property type="interactions" value="2"/>
</dbReference>
<dbReference type="STRING" id="7955.ENSDARP00000112957"/>
<dbReference type="PaxDb" id="7955-ENSDARP00000112957"/>
<dbReference type="PeptideAtlas" id="A4QP75"/>
<dbReference type="Ensembl" id="ENSDART00000143745">
    <property type="protein sequence ID" value="ENSDARP00000112957"/>
    <property type="gene ID" value="ENSDARG00000033967"/>
</dbReference>
<dbReference type="GeneID" id="606657"/>
<dbReference type="KEGG" id="dre:606657"/>
<dbReference type="AGR" id="ZFIN:ZDB-GENE-050809-101"/>
<dbReference type="CTD" id="79979"/>
<dbReference type="ZFIN" id="ZDB-GENE-050809-101">
    <property type="gene designation" value="trmt2b"/>
</dbReference>
<dbReference type="eggNOG" id="KOG2187">
    <property type="taxonomic scope" value="Eukaryota"/>
</dbReference>
<dbReference type="InParanoid" id="A4QP75"/>
<dbReference type="OMA" id="HGQPHIY"/>
<dbReference type="OrthoDB" id="10250660at2759"/>
<dbReference type="PhylomeDB" id="A4QP75"/>
<dbReference type="TreeFam" id="TF352239"/>
<dbReference type="PRO" id="PR:A4QP75"/>
<dbReference type="Proteomes" id="UP000000437">
    <property type="component" value="Chromosome 13"/>
</dbReference>
<dbReference type="Bgee" id="ENSDARG00000033967">
    <property type="expression patterns" value="Expressed in presomitic mesoderm and 24 other cell types or tissues"/>
</dbReference>
<dbReference type="ExpressionAtlas" id="A4QP75">
    <property type="expression patterns" value="baseline"/>
</dbReference>
<dbReference type="GO" id="GO:0005739">
    <property type="term" value="C:mitochondrion"/>
    <property type="evidence" value="ECO:0000250"/>
    <property type="project" value="UniProtKB"/>
</dbReference>
<dbReference type="GO" id="GO:0070041">
    <property type="term" value="F:rRNA (uridine-C5-)-methyltransferase activity"/>
    <property type="evidence" value="ECO:0000250"/>
    <property type="project" value="UniProtKB"/>
</dbReference>
<dbReference type="GO" id="GO:0030697">
    <property type="term" value="F:tRNA (uracil(54)-C5)-methyltransferase activity, S-adenosyl methionine-dependent"/>
    <property type="evidence" value="ECO:0000250"/>
    <property type="project" value="UniProtKB"/>
</dbReference>
<dbReference type="GO" id="GO:0008033">
    <property type="term" value="P:tRNA processing"/>
    <property type="evidence" value="ECO:0007669"/>
    <property type="project" value="UniProtKB-KW"/>
</dbReference>
<dbReference type="CDD" id="cd02440">
    <property type="entry name" value="AdoMet_MTases"/>
    <property type="match status" value="1"/>
</dbReference>
<dbReference type="Gene3D" id="2.40.50.1070">
    <property type="match status" value="1"/>
</dbReference>
<dbReference type="Gene3D" id="3.40.50.150">
    <property type="entry name" value="Vaccinia Virus protein VP39"/>
    <property type="match status" value="1"/>
</dbReference>
<dbReference type="InterPro" id="IPR029063">
    <property type="entry name" value="SAM-dependent_MTases_sf"/>
</dbReference>
<dbReference type="InterPro" id="IPR045850">
    <property type="entry name" value="TRM2_met"/>
</dbReference>
<dbReference type="InterPro" id="IPR025823">
    <property type="entry name" value="TRM2B_chor"/>
</dbReference>
<dbReference type="InterPro" id="IPR010280">
    <property type="entry name" value="U5_MeTrfase_fam"/>
</dbReference>
<dbReference type="PANTHER" id="PTHR45904">
    <property type="entry name" value="TRNA (URACIL-5-)-METHYLTRANSFERASE"/>
    <property type="match status" value="1"/>
</dbReference>
<dbReference type="PANTHER" id="PTHR45904:SF1">
    <property type="entry name" value="TRNA (URACIL-5-)-METHYLTRANSFERASE HOMOLOG B"/>
    <property type="match status" value="1"/>
</dbReference>
<dbReference type="Pfam" id="PF05958">
    <property type="entry name" value="tRNA_U5-meth_tr"/>
    <property type="match status" value="1"/>
</dbReference>
<dbReference type="SUPFAM" id="SSF53335">
    <property type="entry name" value="S-adenosyl-L-methionine-dependent methyltransferases"/>
    <property type="match status" value="1"/>
</dbReference>
<dbReference type="PROSITE" id="PS51687">
    <property type="entry name" value="SAM_MT_RNA_M5U"/>
    <property type="match status" value="1"/>
</dbReference>
<dbReference type="PROSITE" id="PS51621">
    <property type="entry name" value="SAM_MT_RNA_M5U_1"/>
    <property type="match status" value="1"/>
</dbReference>
<gene>
    <name type="primary">trmt2b</name>
    <name type="ORF">si:dkeyp-115d2.4</name>
    <name type="ORF">zgc:162982</name>
</gene>
<reference key="1">
    <citation type="journal article" date="2013" name="Nature">
        <title>The zebrafish reference genome sequence and its relationship to the human genome.</title>
        <authorList>
            <person name="Howe K."/>
            <person name="Clark M.D."/>
            <person name="Torroja C.F."/>
            <person name="Torrance J."/>
            <person name="Berthelot C."/>
            <person name="Muffato M."/>
            <person name="Collins J.E."/>
            <person name="Humphray S."/>
            <person name="McLaren K."/>
            <person name="Matthews L."/>
            <person name="McLaren S."/>
            <person name="Sealy I."/>
            <person name="Caccamo M."/>
            <person name="Churcher C."/>
            <person name="Scott C."/>
            <person name="Barrett J.C."/>
            <person name="Koch R."/>
            <person name="Rauch G.J."/>
            <person name="White S."/>
            <person name="Chow W."/>
            <person name="Kilian B."/>
            <person name="Quintais L.T."/>
            <person name="Guerra-Assuncao J.A."/>
            <person name="Zhou Y."/>
            <person name="Gu Y."/>
            <person name="Yen J."/>
            <person name="Vogel J.H."/>
            <person name="Eyre T."/>
            <person name="Redmond S."/>
            <person name="Banerjee R."/>
            <person name="Chi J."/>
            <person name="Fu B."/>
            <person name="Langley E."/>
            <person name="Maguire S.F."/>
            <person name="Laird G.K."/>
            <person name="Lloyd D."/>
            <person name="Kenyon E."/>
            <person name="Donaldson S."/>
            <person name="Sehra H."/>
            <person name="Almeida-King J."/>
            <person name="Loveland J."/>
            <person name="Trevanion S."/>
            <person name="Jones M."/>
            <person name="Quail M."/>
            <person name="Willey D."/>
            <person name="Hunt A."/>
            <person name="Burton J."/>
            <person name="Sims S."/>
            <person name="McLay K."/>
            <person name="Plumb B."/>
            <person name="Davis J."/>
            <person name="Clee C."/>
            <person name="Oliver K."/>
            <person name="Clark R."/>
            <person name="Riddle C."/>
            <person name="Elliot D."/>
            <person name="Threadgold G."/>
            <person name="Harden G."/>
            <person name="Ware D."/>
            <person name="Begum S."/>
            <person name="Mortimore B."/>
            <person name="Kerry G."/>
            <person name="Heath P."/>
            <person name="Phillimore B."/>
            <person name="Tracey A."/>
            <person name="Corby N."/>
            <person name="Dunn M."/>
            <person name="Johnson C."/>
            <person name="Wood J."/>
            <person name="Clark S."/>
            <person name="Pelan S."/>
            <person name="Griffiths G."/>
            <person name="Smith M."/>
            <person name="Glithero R."/>
            <person name="Howden P."/>
            <person name="Barker N."/>
            <person name="Lloyd C."/>
            <person name="Stevens C."/>
            <person name="Harley J."/>
            <person name="Holt K."/>
            <person name="Panagiotidis G."/>
            <person name="Lovell J."/>
            <person name="Beasley H."/>
            <person name="Henderson C."/>
            <person name="Gordon D."/>
            <person name="Auger K."/>
            <person name="Wright D."/>
            <person name="Collins J."/>
            <person name="Raisen C."/>
            <person name="Dyer L."/>
            <person name="Leung K."/>
            <person name="Robertson L."/>
            <person name="Ambridge K."/>
            <person name="Leongamornlert D."/>
            <person name="McGuire S."/>
            <person name="Gilderthorp R."/>
            <person name="Griffiths C."/>
            <person name="Manthravadi D."/>
            <person name="Nichol S."/>
            <person name="Barker G."/>
            <person name="Whitehead S."/>
            <person name="Kay M."/>
            <person name="Brown J."/>
            <person name="Murnane C."/>
            <person name="Gray E."/>
            <person name="Humphries M."/>
            <person name="Sycamore N."/>
            <person name="Barker D."/>
            <person name="Saunders D."/>
            <person name="Wallis J."/>
            <person name="Babbage A."/>
            <person name="Hammond S."/>
            <person name="Mashreghi-Mohammadi M."/>
            <person name="Barr L."/>
            <person name="Martin S."/>
            <person name="Wray P."/>
            <person name="Ellington A."/>
            <person name="Matthews N."/>
            <person name="Ellwood M."/>
            <person name="Woodmansey R."/>
            <person name="Clark G."/>
            <person name="Cooper J."/>
            <person name="Tromans A."/>
            <person name="Grafham D."/>
            <person name="Skuce C."/>
            <person name="Pandian R."/>
            <person name="Andrews R."/>
            <person name="Harrison E."/>
            <person name="Kimberley A."/>
            <person name="Garnett J."/>
            <person name="Fosker N."/>
            <person name="Hall R."/>
            <person name="Garner P."/>
            <person name="Kelly D."/>
            <person name="Bird C."/>
            <person name="Palmer S."/>
            <person name="Gehring I."/>
            <person name="Berger A."/>
            <person name="Dooley C.M."/>
            <person name="Ersan-Urun Z."/>
            <person name="Eser C."/>
            <person name="Geiger H."/>
            <person name="Geisler M."/>
            <person name="Karotki L."/>
            <person name="Kirn A."/>
            <person name="Konantz J."/>
            <person name="Konantz M."/>
            <person name="Oberlander M."/>
            <person name="Rudolph-Geiger S."/>
            <person name="Teucke M."/>
            <person name="Lanz C."/>
            <person name="Raddatz G."/>
            <person name="Osoegawa K."/>
            <person name="Zhu B."/>
            <person name="Rapp A."/>
            <person name="Widaa S."/>
            <person name="Langford C."/>
            <person name="Yang F."/>
            <person name="Schuster S.C."/>
            <person name="Carter N.P."/>
            <person name="Harrow J."/>
            <person name="Ning Z."/>
            <person name="Herrero J."/>
            <person name="Searle S.M."/>
            <person name="Enright A."/>
            <person name="Geisler R."/>
            <person name="Plasterk R.H."/>
            <person name="Lee C."/>
            <person name="Westerfield M."/>
            <person name="de Jong P.J."/>
            <person name="Zon L.I."/>
            <person name="Postlethwait J.H."/>
            <person name="Nusslein-Volhard C."/>
            <person name="Hubbard T.J."/>
            <person name="Roest Crollius H."/>
            <person name="Rogers J."/>
            <person name="Stemple D.L."/>
        </authorList>
    </citation>
    <scope>NUCLEOTIDE SEQUENCE [LARGE SCALE GENOMIC DNA]</scope>
    <source>
        <strain>Tuebingen</strain>
    </source>
</reference>
<reference key="2">
    <citation type="submission" date="2007-04" db="EMBL/GenBank/DDBJ databases">
        <authorList>
            <consortium name="NIH - Zebrafish Gene Collection (ZGC) project"/>
        </authorList>
    </citation>
    <scope>NUCLEOTIDE SEQUENCE [LARGE SCALE MRNA]</scope>
    <source>
        <tissue>Ovary</tissue>
    </source>
</reference>
<name>TRM2B_DANRE</name>
<feature type="transit peptide" description="Mitochondrion" evidence="3">
    <location>
        <begin position="1"/>
        <end status="unknown"/>
    </location>
</feature>
<feature type="chain" id="PRO_0000311935" description="tRNA (uracil-5-)-methyltransferase homolog B">
    <location>
        <begin status="unknown"/>
        <end position="480"/>
    </location>
</feature>
<feature type="active site" description="Nucleophile" evidence="4">
    <location>
        <position position="427"/>
    </location>
</feature>
<feature type="active site" description="Proton acceptor" evidence="1">
    <location>
        <position position="473"/>
    </location>
</feature>
<feature type="binding site" evidence="4">
    <location>
        <position position="299"/>
    </location>
    <ligand>
        <name>S-adenosyl-L-methionine</name>
        <dbReference type="ChEBI" id="CHEBI:59789"/>
    </ligand>
</feature>
<feature type="binding site" evidence="4">
    <location>
        <position position="349"/>
    </location>
    <ligand>
        <name>S-adenosyl-L-methionine</name>
        <dbReference type="ChEBI" id="CHEBI:59789"/>
    </ligand>
</feature>
<feature type="binding site" evidence="4">
    <location>
        <position position="399"/>
    </location>
    <ligand>
        <name>S-adenosyl-L-methionine</name>
        <dbReference type="ChEBI" id="CHEBI:59789"/>
    </ligand>
</feature>
<protein>
    <recommendedName>
        <fullName>tRNA (uracil-5-)-methyltransferase homolog B</fullName>
        <ecNumber evidence="2">2.1.1.35</ecNumber>
    </recommendedName>
    <alternativeName>
        <fullName evidence="5">TRM2 homolog B</fullName>
    </alternativeName>
    <alternativeName>
        <fullName evidence="5">rRNA (uracil-5-)-methyltransferase TRMT2B</fullName>
        <ecNumber evidence="2">2.1.1.-</ecNumber>
    </alternativeName>
</protein>
<comment type="function">
    <text evidence="2">Mitochondrial S-adenosyl-L-methionine-dependent methyltransferase that catalyzes the formation of 5-methyl-uridine in tRNAs and 12S rRNA. Catalyzes the methylation of uridine at position 54 (m5U54) in all tRNAs. Specifically methylates the uridine in position 429 of 12S rRNA (m5U429). Does not affect RNA stability or mitochondrial translation.</text>
</comment>
<comment type="catalytic activity">
    <reaction evidence="2">
        <text>uridine(54) in tRNA + S-adenosyl-L-methionine = 5-methyluridine(54) in tRNA + S-adenosyl-L-homocysteine + H(+)</text>
        <dbReference type="Rhea" id="RHEA:42712"/>
        <dbReference type="Rhea" id="RHEA-COMP:10167"/>
        <dbReference type="Rhea" id="RHEA-COMP:10193"/>
        <dbReference type="ChEBI" id="CHEBI:15378"/>
        <dbReference type="ChEBI" id="CHEBI:57856"/>
        <dbReference type="ChEBI" id="CHEBI:59789"/>
        <dbReference type="ChEBI" id="CHEBI:65315"/>
        <dbReference type="ChEBI" id="CHEBI:74447"/>
        <dbReference type="EC" id="2.1.1.35"/>
    </reaction>
    <physiologicalReaction direction="left-to-right" evidence="2">
        <dbReference type="Rhea" id="RHEA:42713"/>
    </physiologicalReaction>
</comment>
<comment type="catalytic activity">
    <reaction evidence="2">
        <text>a uridine in 12S rRNA + S-adenosyl-L-methionine = a 5-methyluridine in 12S rRNA + S-adenosyl-L-homocysteine + H(+)</text>
        <dbReference type="Rhea" id="RHEA:69859"/>
        <dbReference type="Rhea" id="RHEA-COMP:17791"/>
        <dbReference type="Rhea" id="RHEA-COMP:17792"/>
        <dbReference type="ChEBI" id="CHEBI:15378"/>
        <dbReference type="ChEBI" id="CHEBI:57856"/>
        <dbReference type="ChEBI" id="CHEBI:59789"/>
        <dbReference type="ChEBI" id="CHEBI:65315"/>
        <dbReference type="ChEBI" id="CHEBI:74447"/>
    </reaction>
    <physiologicalReaction direction="left-to-right" evidence="2">
        <dbReference type="Rhea" id="RHEA:69860"/>
    </physiologicalReaction>
</comment>
<comment type="subcellular location">
    <subcellularLocation>
        <location evidence="2">Mitochondrion</location>
    </subcellularLocation>
</comment>
<comment type="similarity">
    <text evidence="4">Belongs to the class I-like SAM-binding methyltransferase superfamily. RNA M5U methyltransferase family.</text>
</comment>
<comment type="sequence caution" evidence="5">
    <conflict type="erroneous initiation">
        <sequence resource="EMBL-CDS" id="AAI39683"/>
    </conflict>
    <text>Truncated N-terminus.</text>
</comment>
<keyword id="KW-0489">Methyltransferase</keyword>
<keyword id="KW-0496">Mitochondrion</keyword>
<keyword id="KW-1185">Reference proteome</keyword>
<keyword id="KW-0698">rRNA processing</keyword>
<keyword id="KW-0949">S-adenosyl-L-methionine</keyword>
<keyword id="KW-0808">Transferase</keyword>
<keyword id="KW-0809">Transit peptide</keyword>
<keyword id="KW-0819">tRNA processing</keyword>
<organism>
    <name type="scientific">Danio rerio</name>
    <name type="common">Zebrafish</name>
    <name type="synonym">Brachydanio rerio</name>
    <dbReference type="NCBI Taxonomy" id="7955"/>
    <lineage>
        <taxon>Eukaryota</taxon>
        <taxon>Metazoa</taxon>
        <taxon>Chordata</taxon>
        <taxon>Craniata</taxon>
        <taxon>Vertebrata</taxon>
        <taxon>Euteleostomi</taxon>
        <taxon>Actinopterygii</taxon>
        <taxon>Neopterygii</taxon>
        <taxon>Teleostei</taxon>
        <taxon>Ostariophysi</taxon>
        <taxon>Cypriniformes</taxon>
        <taxon>Danionidae</taxon>
        <taxon>Danioninae</taxon>
        <taxon>Danio</taxon>
    </lineage>
</organism>
<sequence>MSSAFKAMRLHLTCPLPKQVINIPQTLFSYLITNQRAINNSCKPVKTSNAKKPKLPTTKLSWEERLSDTVTPLWRMTYEDQLQWKYEHQKKILLKMMKELSQDPTRAFSDHLNFPLLPIVASPVRDGYRNKSTFSVNKGIDGNPKTLGFYIGTGKAGNIVCVHADHLLSIPSKHKMVARCYEDFIRLSPLRPCILFDDGGHWREITIRTNSTGHTMAIVYFHPQSLTPEETDIHKAALVEYFTQGPGAICQLDSLYFQETTMTRCSHEQSQYQLLYGQTHIYEEVLGFKFRISPDSFFQVNREAAEALYKTVAELSQPCVGGTLLDVCCGTGAIGISLSPQMERVIGIELIEQAVEDAKFNAALNRVCNCEFLAGKAEVVLPDLMGSLSSDGGLTAVVNPSRAGLHYRVVRALRNHSAIRRLVYISCKPDGEAMRNFRELCCSVGLVRRITGEAFKPVVAVPVDLFPHTPHCELVLVFER</sequence>
<proteinExistence type="evidence at transcript level"/>
<evidence type="ECO:0000250" key="1">
    <source>
        <dbReference type="UniProtKB" id="P23003"/>
    </source>
</evidence>
<evidence type="ECO:0000250" key="2">
    <source>
        <dbReference type="UniProtKB" id="Q96GJ1"/>
    </source>
</evidence>
<evidence type="ECO:0000255" key="3"/>
<evidence type="ECO:0000255" key="4">
    <source>
        <dbReference type="PROSITE-ProRule" id="PRU01024"/>
    </source>
</evidence>
<evidence type="ECO:0000305" key="5"/>
<accession>A4QP75</accession>
<accession>B7ZD53</accession>